<dbReference type="EC" id="1.14.19.-"/>
<dbReference type="EMBL" id="AF027868">
    <property type="protein sequence ID" value="AAB84436.1"/>
    <property type="molecule type" value="Genomic_DNA"/>
</dbReference>
<dbReference type="EMBL" id="AF037430">
    <property type="protein sequence ID" value="AAC38355.1"/>
    <property type="molecule type" value="Genomic_DNA"/>
</dbReference>
<dbReference type="EMBL" id="AL009126">
    <property type="protein sequence ID" value="CAB13810.1"/>
    <property type="molecule type" value="Genomic_DNA"/>
</dbReference>
<dbReference type="PIR" id="B69901">
    <property type="entry name" value="B69901"/>
</dbReference>
<dbReference type="SMR" id="O34653"/>
<dbReference type="FunCoup" id="O34653">
    <property type="interactions" value="476"/>
</dbReference>
<dbReference type="STRING" id="224308.BSU19180"/>
<dbReference type="PaxDb" id="224308-BSU19180"/>
<dbReference type="EnsemblBacteria" id="CAB13810">
    <property type="protein sequence ID" value="CAB13810"/>
    <property type="gene ID" value="BSU_19180"/>
</dbReference>
<dbReference type="GeneID" id="939668"/>
<dbReference type="KEGG" id="bsu:BSU19180"/>
<dbReference type="PATRIC" id="fig|224308.179.peg.2096"/>
<dbReference type="eggNOG" id="COG3239">
    <property type="taxonomic scope" value="Bacteria"/>
</dbReference>
<dbReference type="InParanoid" id="O34653"/>
<dbReference type="OrthoDB" id="9769653at2"/>
<dbReference type="PhylomeDB" id="O34653"/>
<dbReference type="BioCyc" id="BSUB:BSU19180-MONOMER"/>
<dbReference type="UniPathway" id="UPA00199"/>
<dbReference type="Proteomes" id="UP000001570">
    <property type="component" value="Chromosome"/>
</dbReference>
<dbReference type="GO" id="GO:0005886">
    <property type="term" value="C:plasma membrane"/>
    <property type="evidence" value="ECO:0007669"/>
    <property type="project" value="UniProtKB-SubCell"/>
</dbReference>
<dbReference type="GO" id="GO:0016717">
    <property type="term" value="F:oxidoreductase activity, acting on paired donors, with oxidation of a pair of donors resulting in the reduction of molecular oxygen to two molecules of water"/>
    <property type="evidence" value="ECO:0000318"/>
    <property type="project" value="GO_Central"/>
</dbReference>
<dbReference type="GO" id="GO:0006633">
    <property type="term" value="P:fatty acid biosynthetic process"/>
    <property type="evidence" value="ECO:0007669"/>
    <property type="project" value="UniProtKB-KW"/>
</dbReference>
<dbReference type="GO" id="GO:0006629">
    <property type="term" value="P:lipid metabolic process"/>
    <property type="evidence" value="ECO:0000318"/>
    <property type="project" value="GO_Central"/>
</dbReference>
<dbReference type="CDD" id="cd03507">
    <property type="entry name" value="Delta12-FADS-like"/>
    <property type="match status" value="1"/>
</dbReference>
<dbReference type="InterPro" id="IPR005804">
    <property type="entry name" value="FA_desaturase_dom"/>
</dbReference>
<dbReference type="InterPro" id="IPR012171">
    <property type="entry name" value="Fatty_acid_desaturase"/>
</dbReference>
<dbReference type="PANTHER" id="PTHR19353:SF73">
    <property type="entry name" value="FATTY ACID DESATURASE"/>
    <property type="match status" value="1"/>
</dbReference>
<dbReference type="PANTHER" id="PTHR19353">
    <property type="entry name" value="FATTY ACID DESATURASE 2"/>
    <property type="match status" value="1"/>
</dbReference>
<dbReference type="Pfam" id="PF00487">
    <property type="entry name" value="FA_desaturase"/>
    <property type="match status" value="1"/>
</dbReference>
<proteinExistence type="evidence at transcript level"/>
<sequence length="352" mass="40708">MTEQTIAHKQKQLTKQVAAFAQPETKNSLIQLLNTFIPFFGLWFLAYLSLDVSYLLTLALTVIAAGFLTRIFIIFHDCCHQSFFKQKRYNHILGFLTGVLTLFPYLQWQHSHSIHHATSSNLDKRGTGDIWMLTVNEYKAASRRTKLAYRLYRNPFIMFILGPIYVFLITNRFNKKGARRKERVNTYLTNLAIVALAAACCLIFGWQSFLLVQGPIFLISGSIGVWLFYVQHTFEDSYFEADENWSYVQAAVEGSSFYKLPKLLQWLTGNIGYHHVHHLSPKVPNYKLEVAHEHHEPLKNVPTITLKTSLQSLAFRLWDEDNKQFVSFRAIKHIPVSLPPDSPEKQKLRKNA</sequence>
<feature type="chain" id="PRO_0000390566" description="Fatty acid desaturase">
    <location>
        <begin position="1"/>
        <end position="352"/>
    </location>
</feature>
<feature type="transmembrane region" description="Helical" evidence="1">
    <location>
        <begin position="28"/>
        <end position="48"/>
    </location>
</feature>
<feature type="transmembrane region" description="Helical" evidence="1">
    <location>
        <begin position="55"/>
        <end position="75"/>
    </location>
</feature>
<feature type="transmembrane region" description="Helical" evidence="1">
    <location>
        <begin position="89"/>
        <end position="109"/>
    </location>
</feature>
<feature type="transmembrane region" description="Helical" evidence="1">
    <location>
        <begin position="151"/>
        <end position="171"/>
    </location>
</feature>
<feature type="transmembrane region" description="Helical" evidence="1">
    <location>
        <begin position="186"/>
        <end position="206"/>
    </location>
</feature>
<feature type="transmembrane region" description="Helical" evidence="1">
    <location>
        <begin position="209"/>
        <end position="229"/>
    </location>
</feature>
<feature type="short sequence motif" description="Histidine box-1" evidence="1">
    <location>
        <begin position="76"/>
        <end position="80"/>
    </location>
</feature>
<feature type="short sequence motif" description="Histidine box-2" evidence="1">
    <location>
        <begin position="112"/>
        <end position="116"/>
    </location>
</feature>
<feature type="short sequence motif" description="Histidine box-3" evidence="1">
    <location>
        <begin position="274"/>
        <end position="278"/>
    </location>
</feature>
<evidence type="ECO:0000255" key="1"/>
<evidence type="ECO:0000269" key="2">
    <source>
    </source>
</evidence>
<evidence type="ECO:0000269" key="3">
    <source>
    </source>
</evidence>
<evidence type="ECO:0000305" key="4"/>
<comment type="function">
    <text evidence="3">Catalyzes the introduction of a cis-double bond at the delta(5) position of existing saturated fatty acids attached to membrane phospholipids. It is not strictly specific for palmitic acid (C16) but can also accept C14 as well as C18 species to yield unsaturated fatty acids.</text>
</comment>
<comment type="pathway">
    <text>Lipid metabolism; fatty acid metabolism.</text>
</comment>
<comment type="subcellular location">
    <subcellularLocation>
        <location evidence="4">Cell membrane</location>
        <topology evidence="4">Multi-pass membrane protein</topology>
    </subcellularLocation>
</comment>
<comment type="induction">
    <text evidence="2 3">Transcriptionally regulated by DesR/DesK in response to cold shock.</text>
</comment>
<comment type="similarity">
    <text evidence="4">Belongs to the fatty acid desaturase type 1 family.</text>
</comment>
<protein>
    <recommendedName>
        <fullName>Fatty acid desaturase</fullName>
        <ecNumber>1.14.19.-</ecNumber>
    </recommendedName>
    <alternativeName>
        <fullName>Delta(5) acyl-lipid desaturase</fullName>
    </alternativeName>
    <alternativeName>
        <fullName>Delta(5) desaturase</fullName>
    </alternativeName>
</protein>
<name>DES_BACSU</name>
<reference key="1">
    <citation type="submission" date="1997-10" db="EMBL/GenBank/DDBJ databases">
        <title>Sequence analysis of the Bacillus subtilis chromosome region between the terC and odhAB loci cloned in a yeast artificial chromosome.</title>
        <authorList>
            <person name="Lapidus A."/>
            <person name="Galleron N."/>
            <person name="Sorokin A."/>
            <person name="Ehrlich S.D."/>
        </authorList>
    </citation>
    <scope>NUCLEOTIDE SEQUENCE [GENOMIC DNA]</scope>
</reference>
<reference key="2">
    <citation type="journal article" date="1998" name="J. Bacteriol.">
        <title>A Bacillus subtilis gene induced by cold shock encodes a membrane phospholipid desaturase.</title>
        <authorList>
            <person name="Aguilar P.S."/>
            <person name="Cronan J.E. Jr."/>
            <person name="de Mendoza D."/>
        </authorList>
    </citation>
    <scope>NUCLEOTIDE SEQUENCE [GENOMIC DNA]</scope>
    <scope>FUNCTION</scope>
    <scope>INDUCTION BY COLD SHOCK</scope>
</reference>
<reference key="3">
    <citation type="journal article" date="1997" name="Nature">
        <title>The complete genome sequence of the Gram-positive bacterium Bacillus subtilis.</title>
        <authorList>
            <person name="Kunst F."/>
            <person name="Ogasawara N."/>
            <person name="Moszer I."/>
            <person name="Albertini A.M."/>
            <person name="Alloni G."/>
            <person name="Azevedo V."/>
            <person name="Bertero M.G."/>
            <person name="Bessieres P."/>
            <person name="Bolotin A."/>
            <person name="Borchert S."/>
            <person name="Borriss R."/>
            <person name="Boursier L."/>
            <person name="Brans A."/>
            <person name="Braun M."/>
            <person name="Brignell S.C."/>
            <person name="Bron S."/>
            <person name="Brouillet S."/>
            <person name="Bruschi C.V."/>
            <person name="Caldwell B."/>
            <person name="Capuano V."/>
            <person name="Carter N.M."/>
            <person name="Choi S.-K."/>
            <person name="Codani J.-J."/>
            <person name="Connerton I.F."/>
            <person name="Cummings N.J."/>
            <person name="Daniel R.A."/>
            <person name="Denizot F."/>
            <person name="Devine K.M."/>
            <person name="Duesterhoeft A."/>
            <person name="Ehrlich S.D."/>
            <person name="Emmerson P.T."/>
            <person name="Entian K.-D."/>
            <person name="Errington J."/>
            <person name="Fabret C."/>
            <person name="Ferrari E."/>
            <person name="Foulger D."/>
            <person name="Fritz C."/>
            <person name="Fujita M."/>
            <person name="Fujita Y."/>
            <person name="Fuma S."/>
            <person name="Galizzi A."/>
            <person name="Galleron N."/>
            <person name="Ghim S.-Y."/>
            <person name="Glaser P."/>
            <person name="Goffeau A."/>
            <person name="Golightly E.J."/>
            <person name="Grandi G."/>
            <person name="Guiseppi G."/>
            <person name="Guy B.J."/>
            <person name="Haga K."/>
            <person name="Haiech J."/>
            <person name="Harwood C.R."/>
            <person name="Henaut A."/>
            <person name="Hilbert H."/>
            <person name="Holsappel S."/>
            <person name="Hosono S."/>
            <person name="Hullo M.-F."/>
            <person name="Itaya M."/>
            <person name="Jones L.-M."/>
            <person name="Joris B."/>
            <person name="Karamata D."/>
            <person name="Kasahara Y."/>
            <person name="Klaerr-Blanchard M."/>
            <person name="Klein C."/>
            <person name="Kobayashi Y."/>
            <person name="Koetter P."/>
            <person name="Koningstein G."/>
            <person name="Krogh S."/>
            <person name="Kumano M."/>
            <person name="Kurita K."/>
            <person name="Lapidus A."/>
            <person name="Lardinois S."/>
            <person name="Lauber J."/>
            <person name="Lazarevic V."/>
            <person name="Lee S.-M."/>
            <person name="Levine A."/>
            <person name="Liu H."/>
            <person name="Masuda S."/>
            <person name="Mauel C."/>
            <person name="Medigue C."/>
            <person name="Medina N."/>
            <person name="Mellado R.P."/>
            <person name="Mizuno M."/>
            <person name="Moestl D."/>
            <person name="Nakai S."/>
            <person name="Noback M."/>
            <person name="Noone D."/>
            <person name="O'Reilly M."/>
            <person name="Ogawa K."/>
            <person name="Ogiwara A."/>
            <person name="Oudega B."/>
            <person name="Park S.-H."/>
            <person name="Parro V."/>
            <person name="Pohl T.M."/>
            <person name="Portetelle D."/>
            <person name="Porwollik S."/>
            <person name="Prescott A.M."/>
            <person name="Presecan E."/>
            <person name="Pujic P."/>
            <person name="Purnelle B."/>
            <person name="Rapoport G."/>
            <person name="Rey M."/>
            <person name="Reynolds S."/>
            <person name="Rieger M."/>
            <person name="Rivolta C."/>
            <person name="Rocha E."/>
            <person name="Roche B."/>
            <person name="Rose M."/>
            <person name="Sadaie Y."/>
            <person name="Sato T."/>
            <person name="Scanlan E."/>
            <person name="Schleich S."/>
            <person name="Schroeter R."/>
            <person name="Scoffone F."/>
            <person name="Sekiguchi J."/>
            <person name="Sekowska A."/>
            <person name="Seror S.J."/>
            <person name="Serror P."/>
            <person name="Shin B.-S."/>
            <person name="Soldo B."/>
            <person name="Sorokin A."/>
            <person name="Tacconi E."/>
            <person name="Takagi T."/>
            <person name="Takahashi H."/>
            <person name="Takemaru K."/>
            <person name="Takeuchi M."/>
            <person name="Tamakoshi A."/>
            <person name="Tanaka T."/>
            <person name="Terpstra P."/>
            <person name="Tognoni A."/>
            <person name="Tosato V."/>
            <person name="Uchiyama S."/>
            <person name="Vandenbol M."/>
            <person name="Vannier F."/>
            <person name="Vassarotti A."/>
            <person name="Viari A."/>
            <person name="Wambutt R."/>
            <person name="Wedler E."/>
            <person name="Wedler H."/>
            <person name="Weitzenegger T."/>
            <person name="Winters P."/>
            <person name="Wipat A."/>
            <person name="Yamamoto H."/>
            <person name="Yamane K."/>
            <person name="Yasumoto K."/>
            <person name="Yata K."/>
            <person name="Yoshida K."/>
            <person name="Yoshikawa H.-F."/>
            <person name="Zumstein E."/>
            <person name="Yoshikawa H."/>
            <person name="Danchin A."/>
        </authorList>
    </citation>
    <scope>NUCLEOTIDE SEQUENCE [LARGE SCALE GENOMIC DNA]</scope>
    <source>
        <strain>168</strain>
    </source>
</reference>
<reference key="4">
    <citation type="journal article" date="1993" name="Mol. Microbiol.">
        <title>Regulation of the synthesis of unsaturated fatty acids by growth temperature in Bacillus subtilis.</title>
        <authorList>
            <person name="Grau R."/>
            <person name="de Mendoza D."/>
        </authorList>
    </citation>
    <scope>INDUCTION BY COLD SHOCK</scope>
</reference>
<reference key="5">
    <citation type="journal article" date="2006" name="J. Biotechnol.">
        <title>The desaturase from Bacillus subtilis, a promising tool for the selective olefination of phospholipids.</title>
        <authorList>
            <person name="Bonamore A."/>
            <person name="Macone A."/>
            <person name="Colotti G."/>
            <person name="Matarese R.M."/>
            <person name="Boffi A."/>
        </authorList>
    </citation>
    <scope>SUBSTRATE SPECIFICITY</scope>
</reference>
<accession>O34653</accession>
<accession>Q796C9</accession>
<keyword id="KW-1003">Cell membrane</keyword>
<keyword id="KW-0275">Fatty acid biosynthesis</keyword>
<keyword id="KW-0276">Fatty acid metabolism</keyword>
<keyword id="KW-0444">Lipid biosynthesis</keyword>
<keyword id="KW-0443">Lipid metabolism</keyword>
<keyword id="KW-0472">Membrane</keyword>
<keyword id="KW-0560">Oxidoreductase</keyword>
<keyword id="KW-1185">Reference proteome</keyword>
<keyword id="KW-0812">Transmembrane</keyword>
<keyword id="KW-1133">Transmembrane helix</keyword>
<organism>
    <name type="scientific">Bacillus subtilis (strain 168)</name>
    <dbReference type="NCBI Taxonomy" id="224308"/>
    <lineage>
        <taxon>Bacteria</taxon>
        <taxon>Bacillati</taxon>
        <taxon>Bacillota</taxon>
        <taxon>Bacilli</taxon>
        <taxon>Bacillales</taxon>
        <taxon>Bacillaceae</taxon>
        <taxon>Bacillus</taxon>
    </lineage>
</organism>
<gene>
    <name type="primary">des</name>
    <name type="synonym">desA</name>
    <name type="synonym">yocE</name>
    <name type="ordered locus">BSU19180</name>
</gene>